<comment type="function">
    <text evidence="4">Associates with and regulates the activity of the sodium/potassium-transporting ATPase (NKA) which catalyzes the hydrolysis of ATP coupled with the exchange of Na(+) and K(+) ions across the plasma membrane (PubMed:17209044). Decreases the apparent affinity of the transporter for Na(+) (PubMed:17209044). In addition to modulating NKA kinetics, may also function as a regulator of NKA localization to the plasma membrane (PubMed:17209044).</text>
</comment>
<comment type="subunit">
    <text evidence="4">Regulatory subunit of the sodium/potassium-transporting ATPase which is composed of a catalytic alpha subunit, a non-catalytic beta subunit and an additional regulatory subunit. The regulatory subunit, a member of the FXYD protein family, modulates the enzymatic activity in a tissue- and isoform-specific way by changing affinities of the Na+/K+-ATPase toward Na(+), K(+) or ATP.</text>
</comment>
<comment type="subcellular location">
    <subcellularLocation>
        <location evidence="4">Cell membrane</location>
        <topology evidence="8">Single-pass type I membrane protein</topology>
    </subcellularLocation>
</comment>
<comment type="alternative products">
    <event type="alternative splicing"/>
    <isoform>
        <id>Q91XV6-1</id>
        <name>1</name>
        <sequence type="displayed"/>
    </isoform>
    <isoform>
        <id>Q91XV6-2</id>
        <name>2</name>
        <sequence type="described" ref="VSP_001586"/>
    </isoform>
</comment>
<comment type="tissue specificity">
    <text evidence="3 4">Expressed in the neuronal fibers of the medial part of lateral habenula nucleus, thalamus, hypothalamus, stria terminalis, zona incerta, amygdaloid body and cingulum, olfactory bulb, hippocampus, cerebral cortex and cerebellum. In the cerebellum there is a predominant expression pattern in the granule layer of lobules VI-IX of the posterior lobe (PubMed:11165386). Detected in inner ear (PubMed:17209044).</text>
</comment>
<comment type="similarity">
    <text evidence="8">Belongs to the FXYD family.</text>
</comment>
<gene>
    <name type="primary">Fxyd6</name>
    <name type="synonym">Php</name>
</gene>
<sequence length="94" mass="10388">METVLILCSLLAPVVLASAAEKEKEKDPFYYDYQTLRIGGLVFAVVLFSVGILLILSRRCKCSFNQKPRAPGDEEAQVENLITTNAAEPQKAEN</sequence>
<protein>
    <recommendedName>
        <fullName>FXYD domain-containing ion transport regulator 6</fullName>
    </recommendedName>
    <alternativeName>
        <fullName evidence="6">Phosphohippolin</fullName>
    </alternativeName>
    <alternativeName>
        <fullName evidence="7">Vascular endothelial cell-specific protein 6</fullName>
        <shortName evidence="7">VESP6</shortName>
    </alternativeName>
</protein>
<organism>
    <name type="scientific">Rattus norvegicus</name>
    <name type="common">Rat</name>
    <dbReference type="NCBI Taxonomy" id="10116"/>
    <lineage>
        <taxon>Eukaryota</taxon>
        <taxon>Metazoa</taxon>
        <taxon>Chordata</taxon>
        <taxon>Craniata</taxon>
        <taxon>Vertebrata</taxon>
        <taxon>Euteleostomi</taxon>
        <taxon>Mammalia</taxon>
        <taxon>Eutheria</taxon>
        <taxon>Euarchontoglires</taxon>
        <taxon>Glires</taxon>
        <taxon>Rodentia</taxon>
        <taxon>Myomorpha</taxon>
        <taxon>Muroidea</taxon>
        <taxon>Muridae</taxon>
        <taxon>Murinae</taxon>
        <taxon>Rattus</taxon>
    </lineage>
</organism>
<accession>Q91XV6</accession>
<accession>Q9JLR4</accession>
<feature type="signal peptide" evidence="5">
    <location>
        <begin position="1"/>
        <end position="17"/>
    </location>
</feature>
<feature type="chain" id="PRO_0000010376" description="FXYD domain-containing ion transport regulator 6">
    <location>
        <begin position="18"/>
        <end position="94"/>
    </location>
</feature>
<feature type="topological domain" description="Extracellular" evidence="2">
    <location>
        <begin position="18"/>
        <end position="34"/>
    </location>
</feature>
<feature type="transmembrane region" description="Helical" evidence="1">
    <location>
        <begin position="35"/>
        <end position="57"/>
    </location>
</feature>
<feature type="topological domain" description="Cytoplasmic" evidence="2">
    <location>
        <begin position="58"/>
        <end position="94"/>
    </location>
</feature>
<feature type="splice variant" id="VSP_001586" description="In isoform 2." evidence="6">
    <location>
        <position position="20"/>
    </location>
</feature>
<feature type="sequence conflict" description="In Ref. 2; AAF66613." evidence="8" ref="2">
    <original>N</original>
    <variation>S</variation>
    <location>
        <position position="65"/>
    </location>
</feature>
<keyword id="KW-0025">Alternative splicing</keyword>
<keyword id="KW-1003">Cell membrane</keyword>
<keyword id="KW-0903">Direct protein sequencing</keyword>
<keyword id="KW-0406">Ion transport</keyword>
<keyword id="KW-0472">Membrane</keyword>
<keyword id="KW-0630">Potassium</keyword>
<keyword id="KW-0633">Potassium transport</keyword>
<keyword id="KW-1185">Reference proteome</keyword>
<keyword id="KW-0732">Signal</keyword>
<keyword id="KW-0915">Sodium</keyword>
<keyword id="KW-0739">Sodium transport</keyword>
<keyword id="KW-0740">Sodium/potassium transport</keyword>
<keyword id="KW-0812">Transmembrane</keyword>
<keyword id="KW-1133">Transmembrane helix</keyword>
<keyword id="KW-0813">Transport</keyword>
<reference key="1">
    <citation type="submission" date="1999-08" db="EMBL/GenBank/DDBJ databases">
        <title>Identification of VESP6, a vascular endothelial cell specific protein.</title>
        <authorList>
            <person name="Aoki T."/>
            <person name="Toyoda H."/>
            <person name="Nishimoto S."/>
            <person name="Tawara J."/>
            <person name="Komurasaki T."/>
        </authorList>
    </citation>
    <scope>NUCLEOTIDE SEQUENCE [MRNA] (ISOFORM 1)</scope>
    <source>
        <tissue>Liver</tissue>
    </source>
</reference>
<reference key="2">
    <citation type="journal article" date="2001" name="Brain Res. Mol. Brain Res.">
        <title>Molecular cloning and characterization of a novel phospholemman-like protein from rat hippocampus.</title>
        <authorList>
            <person name="Yamaguchi F."/>
            <person name="Yamaguchi K."/>
            <person name="Tai Y."/>
            <person name="Sugimoto K."/>
            <person name="Tokuda M."/>
        </authorList>
    </citation>
    <scope>NUCLEOTIDE SEQUENCE [MRNA] (ISOFORM 2)</scope>
    <scope>TISSUE SPECIFICITY</scope>
    <source>
        <strain>Sprague-Dawley</strain>
        <tissue>Hippocampus</tissue>
    </source>
</reference>
<reference key="3">
    <citation type="journal article" date="2004" name="Genome Res.">
        <title>The status, quality, and expansion of the NIH full-length cDNA project: the Mammalian Gene Collection (MGC).</title>
        <authorList>
            <consortium name="The MGC Project Team"/>
        </authorList>
    </citation>
    <scope>NUCLEOTIDE SEQUENCE [LARGE SCALE MRNA] (ISOFORM 1)</scope>
    <source>
        <tissue>Lung</tissue>
    </source>
</reference>
<reference key="4">
    <citation type="submission" date="2007-09" db="UniProtKB">
        <authorList>
            <person name="Lubec G."/>
            <person name="Kang S.U."/>
            <person name="Lubec S."/>
        </authorList>
    </citation>
    <scope>PROTEIN SEQUENCE OF 25-37</scope>
    <scope>IDENTIFICATION BY MASS SPECTROMETRY</scope>
    <source>
        <strain>Sprague-Dawley</strain>
        <tissue>Brain</tissue>
    </source>
</reference>
<reference key="5">
    <citation type="journal article" date="2015" name="J. Proteome Res.">
        <title>Peptidomics for studying limited proteolysis.</title>
        <authorList>
            <person name="Tsuchiya T."/>
            <person name="Osaki T."/>
            <person name="Minamino N."/>
            <person name="Sasaki K."/>
        </authorList>
    </citation>
    <scope>CLEAVAGE OF SIGNAL PEPTIDE AFTER ALA-17</scope>
    <scope>IDENTIFICATION BY MASS SPECTROMETRY</scope>
</reference>
<reference key="6">
    <citation type="journal article" date="2007" name="J. Biol. Chem.">
        <title>FXYD6 is a novel regulator of Na,K-ATPase expressed in the inner ear.</title>
        <authorList>
            <person name="Delprat B."/>
            <person name="Schaer D."/>
            <person name="Roy S."/>
            <person name="Wang J."/>
            <person name="Puel J.L."/>
            <person name="Geering K."/>
        </authorList>
    </citation>
    <scope>FUNCTION</scope>
    <scope>TISSUE SPECIFICITY</scope>
    <scope>SUBUNIT</scope>
    <scope>SUBCELLULAR LOCATION</scope>
</reference>
<name>FXYD6_RAT</name>
<proteinExistence type="evidence at protein level"/>
<evidence type="ECO:0000250" key="1">
    <source>
        <dbReference type="UniProtKB" id="Q9H0Q3"/>
    </source>
</evidence>
<evidence type="ECO:0000255" key="2"/>
<evidence type="ECO:0000269" key="3">
    <source>
    </source>
</evidence>
<evidence type="ECO:0000269" key="4">
    <source>
    </source>
</evidence>
<evidence type="ECO:0000269" key="5">
    <source>
    </source>
</evidence>
<evidence type="ECO:0000303" key="6">
    <source>
    </source>
</evidence>
<evidence type="ECO:0000303" key="7">
    <source ref="1"/>
</evidence>
<evidence type="ECO:0000305" key="8"/>
<dbReference type="EMBL" id="AB030908">
    <property type="protein sequence ID" value="BAB62242.1"/>
    <property type="molecule type" value="mRNA"/>
</dbReference>
<dbReference type="EMBL" id="AF142439">
    <property type="protein sequence ID" value="AAF66613.1"/>
    <property type="molecule type" value="mRNA"/>
</dbReference>
<dbReference type="EMBL" id="BC072528">
    <property type="protein sequence ID" value="AAH72528.1"/>
    <property type="molecule type" value="mRNA"/>
</dbReference>
<dbReference type="RefSeq" id="NP_071288.1">
    <molecule id="Q91XV6-1"/>
    <property type="nucleotide sequence ID" value="NM_022005.3"/>
</dbReference>
<dbReference type="RefSeq" id="XP_008764393.1">
    <molecule id="Q91XV6-2"/>
    <property type="nucleotide sequence ID" value="XM_008766171.4"/>
</dbReference>
<dbReference type="SMR" id="Q91XV6"/>
<dbReference type="BioGRID" id="248902">
    <property type="interactions" value="1"/>
</dbReference>
<dbReference type="FunCoup" id="Q91XV6">
    <property type="interactions" value="545"/>
</dbReference>
<dbReference type="STRING" id="10116.ENSRNOP00000071857"/>
<dbReference type="PhosphoSitePlus" id="Q91XV6"/>
<dbReference type="SwissPalm" id="Q91XV6"/>
<dbReference type="jPOST" id="Q91XV6"/>
<dbReference type="PaxDb" id="10116-ENSRNOP00000022032"/>
<dbReference type="GeneID" id="63847"/>
<dbReference type="KEGG" id="rno:63847"/>
<dbReference type="UCSC" id="RGD:69315">
    <molecule id="Q91XV6-1"/>
    <property type="organism name" value="rat"/>
</dbReference>
<dbReference type="AGR" id="RGD:69315"/>
<dbReference type="CTD" id="53826"/>
<dbReference type="RGD" id="69315">
    <property type="gene designation" value="Fxyd6"/>
</dbReference>
<dbReference type="VEuPathDB" id="HostDB:ENSRNOG00000016412"/>
<dbReference type="eggNOG" id="ENOG502S570">
    <property type="taxonomic scope" value="Eukaryota"/>
</dbReference>
<dbReference type="HOGENOM" id="CLU_171208_3_0_1"/>
<dbReference type="InParanoid" id="Q91XV6"/>
<dbReference type="PhylomeDB" id="Q91XV6"/>
<dbReference type="TreeFam" id="TF333443"/>
<dbReference type="Reactome" id="R-RNO-5578775">
    <property type="pathway name" value="Ion homeostasis"/>
</dbReference>
<dbReference type="Reactome" id="R-RNO-936837">
    <property type="pathway name" value="Ion transport by P-type ATPases"/>
</dbReference>
<dbReference type="PRO" id="PR:Q91XV6"/>
<dbReference type="Proteomes" id="UP000002494">
    <property type="component" value="Chromosome 8"/>
</dbReference>
<dbReference type="Bgee" id="ENSRNOG00000016412">
    <property type="expression patterns" value="Expressed in frontal cortex and 20 other cell types or tissues"/>
</dbReference>
<dbReference type="ExpressionAtlas" id="Q91XV6">
    <property type="expression patterns" value="baseline and differential"/>
</dbReference>
<dbReference type="GO" id="GO:0098978">
    <property type="term" value="C:glutamatergic synapse"/>
    <property type="evidence" value="ECO:0000266"/>
    <property type="project" value="RGD"/>
</dbReference>
<dbReference type="GO" id="GO:0045211">
    <property type="term" value="C:postsynaptic membrane"/>
    <property type="evidence" value="ECO:0000266"/>
    <property type="project" value="RGD"/>
</dbReference>
<dbReference type="GO" id="GO:0042734">
    <property type="term" value="C:presynaptic membrane"/>
    <property type="evidence" value="ECO:0000266"/>
    <property type="project" value="RGD"/>
</dbReference>
<dbReference type="GO" id="GO:0017080">
    <property type="term" value="F:sodium channel regulator activity"/>
    <property type="evidence" value="ECO:0000318"/>
    <property type="project" value="GO_Central"/>
</dbReference>
<dbReference type="GO" id="GO:1903278">
    <property type="term" value="P:positive regulation of sodium ion export across plasma membrane"/>
    <property type="evidence" value="ECO:0000318"/>
    <property type="project" value="GO_Central"/>
</dbReference>
<dbReference type="GO" id="GO:0006813">
    <property type="term" value="P:potassium ion transport"/>
    <property type="evidence" value="ECO:0007669"/>
    <property type="project" value="UniProtKB-KW"/>
</dbReference>
<dbReference type="GO" id="GO:0006814">
    <property type="term" value="P:sodium ion transport"/>
    <property type="evidence" value="ECO:0007669"/>
    <property type="project" value="UniProtKB-KW"/>
</dbReference>
<dbReference type="FunFam" id="1.20.5.780:FF:000001">
    <property type="entry name" value="Fxyd domain-containing ion transport regulator"/>
    <property type="match status" value="1"/>
</dbReference>
<dbReference type="Gene3D" id="1.20.5.780">
    <property type="entry name" value="Single helix bin"/>
    <property type="match status" value="1"/>
</dbReference>
<dbReference type="InterPro" id="IPR047297">
    <property type="entry name" value="FXYD_motif"/>
</dbReference>
<dbReference type="InterPro" id="IPR000272">
    <property type="entry name" value="Ion-transport_regulator_FXYD"/>
</dbReference>
<dbReference type="PANTHER" id="PTHR14132:SF15">
    <property type="entry name" value="FXYD DOMAIN-CONTAINING ION TRANSPORT REGULATOR 6-RELATED"/>
    <property type="match status" value="1"/>
</dbReference>
<dbReference type="PANTHER" id="PTHR14132">
    <property type="entry name" value="SODIUM/POTASSIUM-TRANSPORTING ATPASE SUBUNIT GAMMA"/>
    <property type="match status" value="1"/>
</dbReference>
<dbReference type="Pfam" id="PF02038">
    <property type="entry name" value="ATP1G1_PLM_MAT8"/>
    <property type="match status" value="1"/>
</dbReference>
<dbReference type="PROSITE" id="PS01310">
    <property type="entry name" value="FXYD"/>
    <property type="match status" value="1"/>
</dbReference>